<keyword id="KW-0014">AIDS</keyword>
<keyword id="KW-1032">Host cell membrane</keyword>
<keyword id="KW-1035">Host cytoplasm</keyword>
<keyword id="KW-1043">Host membrane</keyword>
<keyword id="KW-0945">Host-virus interaction</keyword>
<keyword id="KW-0472">Membrane</keyword>
<keyword id="KW-0479">Metal-binding</keyword>
<keyword id="KW-0597">Phosphoprotein</keyword>
<keyword id="KW-1185">Reference proteome</keyword>
<keyword id="KW-0694">RNA-binding</keyword>
<keyword id="KW-0832">Ubl conjugation</keyword>
<keyword id="KW-0833">Ubl conjugation pathway</keyword>
<keyword id="KW-0946">Virion</keyword>
<keyword id="KW-0862">Zinc</keyword>
<name>VIF_HV190</name>
<organism>
    <name type="scientific">Human immunodeficiency virus type 1 group M subtype H (isolate 90CF056)</name>
    <name type="common">HIV-1</name>
    <dbReference type="NCBI Taxonomy" id="388826"/>
    <lineage>
        <taxon>Viruses</taxon>
        <taxon>Riboviria</taxon>
        <taxon>Pararnavirae</taxon>
        <taxon>Artverviricota</taxon>
        <taxon>Revtraviricetes</taxon>
        <taxon>Ortervirales</taxon>
        <taxon>Retroviridae</taxon>
        <taxon>Orthoretrovirinae</taxon>
        <taxon>Lentivirus</taxon>
        <taxon>Human immunodeficiency virus type 1</taxon>
    </lineage>
</organism>
<proteinExistence type="inferred from homology"/>
<gene>
    <name evidence="1" type="primary">vif</name>
</gene>
<reference key="1">
    <citation type="journal article" date="1998" name="J. Virol.">
        <title>A comprehensive panel of near-full-length clones and reference sequences for non-subtype B isolates of human immunodeficiency virus type 1.</title>
        <authorList>
            <person name="Gao F."/>
            <person name="Robertson D.L."/>
            <person name="Carruthers C.D."/>
            <person name="Morrison S.G."/>
            <person name="Jian B."/>
            <person name="Chen Y."/>
            <person name="Barre-Sinoussi F."/>
            <person name="Girard M."/>
            <person name="Srinivasan A."/>
            <person name="Abimiku A.G."/>
            <person name="Shaw G.M."/>
            <person name="Sharp P.M."/>
            <person name="Hahn B.H."/>
        </authorList>
    </citation>
    <scope>NUCLEOTIDE SEQUENCE [GENOMIC DNA]</scope>
</reference>
<evidence type="ECO:0000255" key="1">
    <source>
        <dbReference type="HAMAP-Rule" id="MF_04081"/>
    </source>
</evidence>
<evidence type="ECO:0000256" key="2">
    <source>
        <dbReference type="SAM" id="MobiDB-lite"/>
    </source>
</evidence>
<dbReference type="EMBL" id="AF005496">
    <property type="protein sequence ID" value="AAD03185.1"/>
    <property type="molecule type" value="Genomic_DNA"/>
</dbReference>
<dbReference type="SMR" id="O70897"/>
<dbReference type="Proteomes" id="UP000007685">
    <property type="component" value="Segment"/>
</dbReference>
<dbReference type="GO" id="GO:0030430">
    <property type="term" value="C:host cell cytoplasm"/>
    <property type="evidence" value="ECO:0007669"/>
    <property type="project" value="UniProtKB-SubCell"/>
</dbReference>
<dbReference type="GO" id="GO:0020002">
    <property type="term" value="C:host cell plasma membrane"/>
    <property type="evidence" value="ECO:0007669"/>
    <property type="project" value="UniProtKB-SubCell"/>
</dbReference>
<dbReference type="GO" id="GO:0016020">
    <property type="term" value="C:membrane"/>
    <property type="evidence" value="ECO:0007669"/>
    <property type="project" value="UniProtKB-UniRule"/>
</dbReference>
<dbReference type="GO" id="GO:0044423">
    <property type="term" value="C:virion component"/>
    <property type="evidence" value="ECO:0007669"/>
    <property type="project" value="UniProtKB-UniRule"/>
</dbReference>
<dbReference type="GO" id="GO:0046872">
    <property type="term" value="F:metal ion binding"/>
    <property type="evidence" value="ECO:0007669"/>
    <property type="project" value="UniProtKB-KW"/>
</dbReference>
<dbReference type="GO" id="GO:0003723">
    <property type="term" value="F:RNA binding"/>
    <property type="evidence" value="ECO:0007669"/>
    <property type="project" value="UniProtKB-UniRule"/>
</dbReference>
<dbReference type="GO" id="GO:0019058">
    <property type="term" value="P:viral life cycle"/>
    <property type="evidence" value="ECO:0007669"/>
    <property type="project" value="InterPro"/>
</dbReference>
<dbReference type="HAMAP" id="MF_04081">
    <property type="entry name" value="HIV_VIF"/>
    <property type="match status" value="1"/>
</dbReference>
<dbReference type="InterPro" id="IPR000475">
    <property type="entry name" value="Vif"/>
</dbReference>
<dbReference type="Pfam" id="PF00559">
    <property type="entry name" value="Vif"/>
    <property type="match status" value="1"/>
</dbReference>
<dbReference type="PRINTS" id="PR00349">
    <property type="entry name" value="VIRIONINFFCT"/>
</dbReference>
<feature type="chain" id="PRO_0000245104" description="Virion infectivity factor" evidence="1">
    <location>
        <begin position="1"/>
        <end position="192"/>
    </location>
</feature>
<feature type="chain" id="PRO_0000245105" description="p17" evidence="1">
    <location>
        <begin position="1"/>
        <end position="150"/>
    </location>
</feature>
<feature type="chain" id="PRO_0000245106" description="p7" evidence="1">
    <location>
        <begin position="151"/>
        <end position="192"/>
    </location>
</feature>
<feature type="region of interest" description="Interaction with host APOBEC3F; F1-box" evidence="1">
    <location>
        <begin position="14"/>
        <end position="17"/>
    </location>
</feature>
<feature type="region of interest" description="Interaction with host APOBEC3G; G-box" evidence="1">
    <location>
        <begin position="40"/>
        <end position="44"/>
    </location>
</feature>
<feature type="region of interest" description="Interaction with host APOBEC3F and APOBEC3G; FG-box" evidence="1">
    <location>
        <begin position="54"/>
        <end position="72"/>
    </location>
</feature>
<feature type="region of interest" description="Interaction with host APOBEC3F; F2-box" evidence="1">
    <location>
        <begin position="74"/>
        <end position="79"/>
    </location>
</feature>
<feature type="region of interest" description="RNA-binding" evidence="1">
    <location>
        <begin position="75"/>
        <end position="114"/>
    </location>
</feature>
<feature type="region of interest" description="SOCS box-like" evidence="1">
    <location>
        <begin position="151"/>
        <end position="180"/>
    </location>
</feature>
<feature type="region of interest" description="Multimerization" evidence="1">
    <location>
        <begin position="151"/>
        <end position="164"/>
    </location>
</feature>
<feature type="region of interest" description="Membrane association" evidence="1">
    <location>
        <begin position="171"/>
        <end position="172"/>
    </location>
</feature>
<feature type="region of interest" description="Disordered" evidence="2">
    <location>
        <begin position="172"/>
        <end position="192"/>
    </location>
</feature>
<feature type="short sequence motif" description="HCCH motif" evidence="1">
    <location>
        <begin position="108"/>
        <end position="139"/>
    </location>
</feature>
<feature type="short sequence motif" description="BC-box-like motif" evidence="1">
    <location>
        <begin position="144"/>
        <end position="153"/>
    </location>
</feature>
<feature type="compositionally biased region" description="Basic residues" evidence="2">
    <location>
        <begin position="176"/>
        <end position="186"/>
    </location>
</feature>
<feature type="binding site" evidence="1">
    <location>
        <position position="108"/>
    </location>
    <ligand>
        <name>Zn(2+)</name>
        <dbReference type="ChEBI" id="CHEBI:29105"/>
    </ligand>
</feature>
<feature type="binding site" evidence="1">
    <location>
        <position position="114"/>
    </location>
    <ligand>
        <name>Zn(2+)</name>
        <dbReference type="ChEBI" id="CHEBI:29105"/>
    </ligand>
</feature>
<feature type="binding site" evidence="1">
    <location>
        <position position="133"/>
    </location>
    <ligand>
        <name>Zn(2+)</name>
        <dbReference type="ChEBI" id="CHEBI:29105"/>
    </ligand>
</feature>
<feature type="binding site" evidence="1">
    <location>
        <position position="139"/>
    </location>
    <ligand>
        <name>Zn(2+)</name>
        <dbReference type="ChEBI" id="CHEBI:29105"/>
    </ligand>
</feature>
<feature type="site" description="Cleavage in virion (by viral protease)" evidence="1">
    <location>
        <begin position="150"/>
        <end position="151"/>
    </location>
</feature>
<feature type="modified residue" description="Phosphothreonine; by host MAP4K1" evidence="1">
    <location>
        <position position="96"/>
    </location>
</feature>
<feature type="modified residue" description="Phosphoserine; by host MAP4K1" evidence="1">
    <location>
        <position position="165"/>
    </location>
</feature>
<feature type="modified residue" description="Phosphothreonine; by host" evidence="1">
    <location>
        <position position="188"/>
    </location>
</feature>
<comment type="function">
    <text evidence="1">Counteracts the innate antiviral activity of host APOBEC3F and APOBEC3G by promoting their ubiquitination and degradation. Acts as a substrate recognition component of an E3 ubiquitin-protein ligase complex: mechanistically, Vif hijacks a host cullin-5-RING E3 ubiquitin-protein ligase complex (ECS complex) and the transcription coactivator CBFB/CBF-beta to form an active E3 ubiquitin-protein ligase complex that targets APOBEC3G and APOBEC3F for polyubiquitination, leading to their degradation by the proteasome. Vif interaction with APOBEC3G also blocks its cytidine deaminase activity in a proteasome-independent manner, suggesting a dual inhibitory mechanism. May interact directly with APOBEC3G mRNA in order to inhibit its translation. Association with CBFB/CBF-beta also inhibits the transcription coactivator activity of CBFB/CBF-beta. Seems to play a role in viral morphology by affecting the stability of the viral nucleoprotein core. Finally, Vif also contributes to the G2 cell cycle arrest observed in HIV infected cells.</text>
</comment>
<comment type="subunit">
    <text evidence="1">Homomultimer; in vitro and presumably in vivo. Interacts with viral RNA and Pr55Gag precursor; these interactions mediate Vif incorporation into the virion. Interacts with the viral reverse transcriptase. Forms cullin-5-RING E3 ubiquitin-protein ligase complex (ECS complex) by interacting with host CUL5, RBX2, elongin BC complex (ELOB and ELOC) and CBFB/CBF-beta. Within the ECS complex, Vif interacts directly with host CUL5, ELOC and APOBEC (APOBEC3F and APOBEC3G) substrates. The ECS complex also contains some single-stranded RNA (ssRNA) that acts as a glue that bridges Vif with APOBEC (APOBEC3F and APOBEC3G) substrates. Interacts with host UBCE7IP1 isoform 3/ZIN and possibly with SAT. Interacts with host tyrosine kinases HCK and FYN; these interactions may decrease level of phosphorylated APOBEC3G incorporation into virions. Interacts with host ABCE1; this interaction may play a role in protecting viral RNA from damage during viral assembly. Interacts with host MDM2; this interaction targets Vif for degradation by the proteasome.</text>
</comment>
<comment type="subcellular location">
    <subcellularLocation>
        <location evidence="1">Host cytoplasm</location>
    </subcellularLocation>
    <subcellularLocation>
        <location evidence="1">Host cell membrane</location>
        <topology evidence="1">Peripheral membrane protein</topology>
        <orientation evidence="1">Cytoplasmic side</orientation>
    </subcellularLocation>
    <subcellularLocation>
        <location evidence="1">Virion</location>
    </subcellularLocation>
    <text evidence="1">In the cytoplasm, seems to colocalize with intermediate filament vimentin. A fraction is associated with the cytoplasmic side of cellular membranes, presumably via the interaction with Pr55Gag precursor. Incorporated in virions at a ratio of approximately 7 to 20 molecules per virion.</text>
</comment>
<comment type="induction">
    <text evidence="1">Expressed late during infection in a Rev-dependent manner.</text>
</comment>
<comment type="domain">
    <text evidence="1">The BC-like-box motif mediates the interaction with elongin BC complex.</text>
</comment>
<comment type="domain">
    <text evidence="1">The HCCH motif (H-x(5)-C-x(18)-C-x(5)-H) mediates the interaction with CUL5.</text>
</comment>
<comment type="PTM">
    <text evidence="1">Processed in virion by the viral protease.</text>
</comment>
<comment type="PTM">
    <text evidence="1">Highly phosphorylated on serine and threonine residues.</text>
</comment>
<comment type="PTM">
    <text evidence="1">Polyubiquitinated and degraded by the proteasome in the presence of APOBEC3G.</text>
</comment>
<comment type="miscellaneous">
    <text evidence="1">Vif-defective viruses show catastrophic failure in reverse transcription due to APOBEC-induced mutations that initiate a DNA base repair pathway and compromise the structural integrity of the ssDNA. In the absence of Vif, the virion is morphologically abnormal.</text>
</comment>
<comment type="miscellaneous">
    <text evidence="1">HIV-1 lineages are divided in three main groups, M (for Major), O (for Outlier), and N (for New, or Non-M, Non-O). The vast majority of strains found worldwide belong to the group M. Group O seems to be endemic to and largely confined to Cameroon and neighboring countries in West Central Africa, where these viruses represent a small minority of HIV-1 strains. The group N is represented by a limited number of isolates from Cameroonian persons. The group M is further subdivided in 9 clades or subtypes (A to D, F to H, J and K).</text>
</comment>
<comment type="miscellaneous">
    <text evidence="1">Required for replication in 'nonpermissive' cells, including primary T-cells, macrophages and certain T-cell lines, but is dispensable for replication in 'permissive' cell lines, such as 293T cells. In nonpermissive cells, Vif-defective viruses can produce virions, but they fail to complete reverse transcription and cannot successfully infect new cells.</text>
</comment>
<comment type="similarity">
    <text evidence="1">Belongs to the primate lentivirus group Vif protein family.</text>
</comment>
<sequence>MENRWQVMIVWQVDRMRINTWKSLVKYHMHISRKARGWFYRHHFESTHPRISSEVHIPLGEARLVITTYWGLNTGEREWHLGQGVSIEWRLKRYSTQVEPGLADQLIHMHYFDCFSESAIRKAILGRVVRPRCNYPAGHKQVGTLQYLALTALVAPKKIKPPLPSVRKLVEDRWNKPQKTRGHRGSHTMNGH</sequence>
<accession>O70897</accession>
<organismHost>
    <name type="scientific">Homo sapiens</name>
    <name type="common">Human</name>
    <dbReference type="NCBI Taxonomy" id="9606"/>
</organismHost>
<protein>
    <recommendedName>
        <fullName evidence="1">Virion infectivity factor</fullName>
        <shortName evidence="1">Vif</shortName>
    </recommendedName>
    <alternativeName>
        <fullName evidence="1">SOR protein</fullName>
    </alternativeName>
    <component>
        <recommendedName>
            <fullName evidence="1">p17</fullName>
        </recommendedName>
    </component>
    <component>
        <recommendedName>
            <fullName evidence="1">p7</fullName>
        </recommendedName>
    </component>
</protein>